<comment type="function">
    <text evidence="1">Core subunit of the mitochondrial membrane respiratory chain NADH dehydrogenase (Complex I) which catalyzes electron transfer from NADH through the respiratory chain, using ubiquinone as an electron acceptor. Part of the enzyme membrane arm which is embedded in the lipid bilayer and involved in proton translocation.</text>
</comment>
<comment type="catalytic activity">
    <reaction evidence="1">
        <text>a ubiquinone + NADH + 5 H(+)(in) = a ubiquinol + NAD(+) + 4 H(+)(out)</text>
        <dbReference type="Rhea" id="RHEA:29091"/>
        <dbReference type="Rhea" id="RHEA-COMP:9565"/>
        <dbReference type="Rhea" id="RHEA-COMP:9566"/>
        <dbReference type="ChEBI" id="CHEBI:15378"/>
        <dbReference type="ChEBI" id="CHEBI:16389"/>
        <dbReference type="ChEBI" id="CHEBI:17976"/>
        <dbReference type="ChEBI" id="CHEBI:57540"/>
        <dbReference type="ChEBI" id="CHEBI:57945"/>
        <dbReference type="EC" id="7.1.1.2"/>
    </reaction>
    <physiologicalReaction direction="left-to-right" evidence="1">
        <dbReference type="Rhea" id="RHEA:29092"/>
    </physiologicalReaction>
</comment>
<comment type="subunit">
    <text evidence="2">Core subunit of respiratory chain NADH dehydrogenase (Complex I) which is composed of 45 different subunits.</text>
</comment>
<comment type="subcellular location">
    <subcellularLocation>
        <location evidence="2">Mitochondrion inner membrane</location>
        <topology evidence="3">Multi-pass membrane protein</topology>
    </subcellularLocation>
</comment>
<comment type="similarity">
    <text evidence="4">Belongs to the complex I subunit 4L family.</text>
</comment>
<proteinExistence type="inferred from homology"/>
<reference key="1">
    <citation type="journal article" date="2006" name="Nature">
        <title>Multiplex amplification of the mammoth mitochondrial genome and the evolution of Elephantidae.</title>
        <authorList>
            <person name="Krause J."/>
            <person name="Dear P.H."/>
            <person name="Pollack J.L."/>
            <person name="Slatkin M."/>
            <person name="Spriggs H."/>
            <person name="Barnes I."/>
            <person name="Lister A.M."/>
            <person name="Ebersberger I."/>
            <person name="Paeaebo S."/>
            <person name="Hofreiter M."/>
        </authorList>
    </citation>
    <scope>NUCLEOTIDE SEQUENCE [GENOMIC DNA]</scope>
</reference>
<reference key="2">
    <citation type="journal article" date="2006" name="PLoS Biol.">
        <title>Complete mitochondrial genome and phylogeny of Pleistocene mammoth Mammuthus primigenius.</title>
        <authorList>
            <person name="Rogaev E.I."/>
            <person name="Moliaka Y.K."/>
            <person name="Malyarchuk B.A."/>
            <person name="Kondrashov F.A."/>
            <person name="Derenko M.V."/>
            <person name="Chumakov I."/>
            <person name="Grigorenko A.P."/>
        </authorList>
    </citation>
    <scope>NUCLEOTIDE SEQUENCE [GENOMIC DNA]</scope>
    <source>
        <tissue>Muscle</tissue>
    </source>
</reference>
<dbReference type="EC" id="7.1.1.2"/>
<dbReference type="EMBL" id="DQ188829">
    <property type="protein sequence ID" value="ABA29792.1"/>
    <property type="molecule type" value="Genomic_DNA"/>
</dbReference>
<dbReference type="EMBL" id="DQ316067">
    <property type="protein sequence ID" value="ABC17886.1"/>
    <property type="molecule type" value="Genomic_DNA"/>
</dbReference>
<dbReference type="RefSeq" id="YP_398762.1">
    <property type="nucleotide sequence ID" value="NC_007596.2"/>
</dbReference>
<dbReference type="SMR" id="Q38PR4"/>
<dbReference type="GeneID" id="3773149"/>
<dbReference type="CTD" id="4539"/>
<dbReference type="GO" id="GO:0005743">
    <property type="term" value="C:mitochondrial inner membrane"/>
    <property type="evidence" value="ECO:0000250"/>
    <property type="project" value="UniProtKB"/>
</dbReference>
<dbReference type="GO" id="GO:0045271">
    <property type="term" value="C:respiratory chain complex I"/>
    <property type="evidence" value="ECO:0000250"/>
    <property type="project" value="UniProtKB"/>
</dbReference>
<dbReference type="GO" id="GO:0008137">
    <property type="term" value="F:NADH dehydrogenase (ubiquinone) activity"/>
    <property type="evidence" value="ECO:0000250"/>
    <property type="project" value="UniProtKB"/>
</dbReference>
<dbReference type="GO" id="GO:0042773">
    <property type="term" value="P:ATP synthesis coupled electron transport"/>
    <property type="evidence" value="ECO:0007669"/>
    <property type="project" value="InterPro"/>
</dbReference>
<dbReference type="FunFam" id="1.10.287.3510:FF:000002">
    <property type="entry name" value="NADH-ubiquinone oxidoreductase chain 4L"/>
    <property type="match status" value="1"/>
</dbReference>
<dbReference type="Gene3D" id="1.10.287.3510">
    <property type="match status" value="1"/>
</dbReference>
<dbReference type="InterPro" id="IPR001133">
    <property type="entry name" value="NADH_UbQ_OxRdtase_chain4L/K"/>
</dbReference>
<dbReference type="InterPro" id="IPR039428">
    <property type="entry name" value="NUOK/Mnh_C1-like"/>
</dbReference>
<dbReference type="PANTHER" id="PTHR11434:SF0">
    <property type="entry name" value="NADH-UBIQUINONE OXIDOREDUCTASE CHAIN 4L"/>
    <property type="match status" value="1"/>
</dbReference>
<dbReference type="PANTHER" id="PTHR11434">
    <property type="entry name" value="NADH-UBIQUINONE OXIDOREDUCTASE SUBUNIT ND4L"/>
    <property type="match status" value="1"/>
</dbReference>
<dbReference type="Pfam" id="PF00420">
    <property type="entry name" value="Oxidored_q2"/>
    <property type="match status" value="1"/>
</dbReference>
<name>NU4LM_MAMPR</name>
<accession>Q38PR4</accession>
<gene>
    <name type="primary">MT-ND4L</name>
    <name type="synonym">MTND4L</name>
    <name type="synonym">NADH4L</name>
    <name type="synonym">ND4L</name>
</gene>
<evidence type="ECO:0000250" key="1">
    <source>
        <dbReference type="UniProtKB" id="P03901"/>
    </source>
</evidence>
<evidence type="ECO:0000250" key="2">
    <source>
        <dbReference type="UniProtKB" id="P03902"/>
    </source>
</evidence>
<evidence type="ECO:0000255" key="3"/>
<evidence type="ECO:0000305" key="4"/>
<protein>
    <recommendedName>
        <fullName>NADH-ubiquinone oxidoreductase chain 4L</fullName>
        <ecNumber>7.1.1.2</ecNumber>
    </recommendedName>
    <alternativeName>
        <fullName>NADH dehydrogenase subunit 4L</fullName>
    </alternativeName>
</protein>
<organism>
    <name type="scientific">Mammuthus primigenius</name>
    <name type="common">Siberian woolly mammoth</name>
    <dbReference type="NCBI Taxonomy" id="37349"/>
    <lineage>
        <taxon>Eukaryota</taxon>
        <taxon>Metazoa</taxon>
        <taxon>Chordata</taxon>
        <taxon>Craniata</taxon>
        <taxon>Vertebrata</taxon>
        <taxon>Euteleostomi</taxon>
        <taxon>Mammalia</taxon>
        <taxon>Eutheria</taxon>
        <taxon>Afrotheria</taxon>
        <taxon>Proboscidea</taxon>
        <taxon>Elephantidae</taxon>
        <taxon>Mammuthus</taxon>
    </lineage>
</organism>
<sequence length="98" mass="10831">MPYIYMNITLAFVISLIGTLMYRSHLMSSLLCLEGMMLSLFTLNALLSLNMNFTLSTTVPLILLVFAACEAAVGLALLIMISNTYGLDYVQNLNLLQC</sequence>
<geneLocation type="mitochondrion"/>
<feature type="chain" id="PRO_0000232858" description="NADH-ubiquinone oxidoreductase chain 4L">
    <location>
        <begin position="1"/>
        <end position="98"/>
    </location>
</feature>
<feature type="transmembrane region" description="Helical" evidence="3">
    <location>
        <begin position="1"/>
        <end position="21"/>
    </location>
</feature>
<feature type="transmembrane region" description="Helical" evidence="3">
    <location>
        <begin position="29"/>
        <end position="49"/>
    </location>
</feature>
<feature type="transmembrane region" description="Helical" evidence="3">
    <location>
        <begin position="61"/>
        <end position="81"/>
    </location>
</feature>
<keyword id="KW-0249">Electron transport</keyword>
<keyword id="KW-0952">Extinct organism protein</keyword>
<keyword id="KW-0472">Membrane</keyword>
<keyword id="KW-0496">Mitochondrion</keyword>
<keyword id="KW-0999">Mitochondrion inner membrane</keyword>
<keyword id="KW-0520">NAD</keyword>
<keyword id="KW-0679">Respiratory chain</keyword>
<keyword id="KW-1278">Translocase</keyword>
<keyword id="KW-0812">Transmembrane</keyword>
<keyword id="KW-1133">Transmembrane helix</keyword>
<keyword id="KW-0813">Transport</keyword>
<keyword id="KW-0830">Ubiquinone</keyword>